<comment type="function">
    <text evidence="1">Key component of the proton channel; it plays a direct role in the translocation of protons across the membrane.</text>
</comment>
<comment type="subunit">
    <text evidence="1">F-type ATPases have 2 components, CF(1) - the catalytic core - and CF(0) - the membrane proton channel. CF(1) has five subunits: alpha(3), beta(3), gamma(1), delta(1), epsilon(1). CF(0) has three main subunits: a(1), b(2) and c(9-12). The alpha and beta chains form an alternating ring which encloses part of the gamma chain. CF(1) is attached to CF(0) by a central stalk formed by the gamma and epsilon chains, while a peripheral stalk is formed by the delta and b chains.</text>
</comment>
<comment type="subcellular location">
    <subcellularLocation>
        <location evidence="1">Cell membrane</location>
        <topology evidence="1">Multi-pass membrane protein</topology>
    </subcellularLocation>
</comment>
<comment type="similarity">
    <text evidence="1">Belongs to the ATPase A chain family.</text>
</comment>
<gene>
    <name evidence="1" type="primary">atpB</name>
    <name type="ordered locus">M6_Spy0593</name>
</gene>
<evidence type="ECO:0000255" key="1">
    <source>
        <dbReference type="HAMAP-Rule" id="MF_01393"/>
    </source>
</evidence>
<keyword id="KW-0066">ATP synthesis</keyword>
<keyword id="KW-1003">Cell membrane</keyword>
<keyword id="KW-0138">CF(0)</keyword>
<keyword id="KW-0375">Hydrogen ion transport</keyword>
<keyword id="KW-0406">Ion transport</keyword>
<keyword id="KW-0472">Membrane</keyword>
<keyword id="KW-0812">Transmembrane</keyword>
<keyword id="KW-1133">Transmembrane helix</keyword>
<keyword id="KW-0813">Transport</keyword>
<dbReference type="EMBL" id="CP000003">
    <property type="protein sequence ID" value="AAT86728.1"/>
    <property type="molecule type" value="Genomic_DNA"/>
</dbReference>
<dbReference type="RefSeq" id="WP_002985244.1">
    <property type="nucleotide sequence ID" value="NC_006086.1"/>
</dbReference>
<dbReference type="SMR" id="Q5XCY5"/>
<dbReference type="GeneID" id="69901119"/>
<dbReference type="KEGG" id="spa:M6_Spy0593"/>
<dbReference type="HOGENOM" id="CLU_041018_2_3_9"/>
<dbReference type="Proteomes" id="UP000001167">
    <property type="component" value="Chromosome"/>
</dbReference>
<dbReference type="GO" id="GO:0005886">
    <property type="term" value="C:plasma membrane"/>
    <property type="evidence" value="ECO:0007669"/>
    <property type="project" value="UniProtKB-SubCell"/>
</dbReference>
<dbReference type="GO" id="GO:0045259">
    <property type="term" value="C:proton-transporting ATP synthase complex"/>
    <property type="evidence" value="ECO:0007669"/>
    <property type="project" value="UniProtKB-KW"/>
</dbReference>
<dbReference type="GO" id="GO:0046933">
    <property type="term" value="F:proton-transporting ATP synthase activity, rotational mechanism"/>
    <property type="evidence" value="ECO:0007669"/>
    <property type="project" value="UniProtKB-UniRule"/>
</dbReference>
<dbReference type="GO" id="GO:0042777">
    <property type="term" value="P:proton motive force-driven plasma membrane ATP synthesis"/>
    <property type="evidence" value="ECO:0007669"/>
    <property type="project" value="TreeGrafter"/>
</dbReference>
<dbReference type="CDD" id="cd00310">
    <property type="entry name" value="ATP-synt_Fo_a_6"/>
    <property type="match status" value="1"/>
</dbReference>
<dbReference type="Gene3D" id="1.20.120.220">
    <property type="entry name" value="ATP synthase, F0 complex, subunit A"/>
    <property type="match status" value="1"/>
</dbReference>
<dbReference type="HAMAP" id="MF_01393">
    <property type="entry name" value="ATP_synth_a_bact"/>
    <property type="match status" value="1"/>
</dbReference>
<dbReference type="InterPro" id="IPR045082">
    <property type="entry name" value="ATP_syn_F0_a_bact/chloroplast"/>
</dbReference>
<dbReference type="InterPro" id="IPR000568">
    <property type="entry name" value="ATP_synth_F0_asu"/>
</dbReference>
<dbReference type="InterPro" id="IPR023011">
    <property type="entry name" value="ATP_synth_F0_asu_AS"/>
</dbReference>
<dbReference type="InterPro" id="IPR035908">
    <property type="entry name" value="F0_ATP_A_sf"/>
</dbReference>
<dbReference type="NCBIfam" id="TIGR01131">
    <property type="entry name" value="ATP_synt_6_or_A"/>
    <property type="match status" value="1"/>
</dbReference>
<dbReference type="NCBIfam" id="NF004479">
    <property type="entry name" value="PRK05815.1-4"/>
    <property type="match status" value="1"/>
</dbReference>
<dbReference type="PANTHER" id="PTHR42823">
    <property type="entry name" value="ATP SYNTHASE SUBUNIT A, CHLOROPLASTIC"/>
    <property type="match status" value="1"/>
</dbReference>
<dbReference type="PANTHER" id="PTHR42823:SF3">
    <property type="entry name" value="ATP SYNTHASE SUBUNIT A, CHLOROPLASTIC"/>
    <property type="match status" value="1"/>
</dbReference>
<dbReference type="Pfam" id="PF00119">
    <property type="entry name" value="ATP-synt_A"/>
    <property type="match status" value="1"/>
</dbReference>
<dbReference type="PRINTS" id="PR00123">
    <property type="entry name" value="ATPASEA"/>
</dbReference>
<dbReference type="SUPFAM" id="SSF81336">
    <property type="entry name" value="F1F0 ATP synthase subunit A"/>
    <property type="match status" value="1"/>
</dbReference>
<dbReference type="PROSITE" id="PS00449">
    <property type="entry name" value="ATPASE_A"/>
    <property type="match status" value="1"/>
</dbReference>
<name>ATP6_STRP6</name>
<feature type="chain" id="PRO_1000145328" description="ATP synthase subunit a">
    <location>
        <begin position="1"/>
        <end position="238"/>
    </location>
</feature>
<feature type="transmembrane region" description="Helical" evidence="1">
    <location>
        <begin position="18"/>
        <end position="38"/>
    </location>
</feature>
<feature type="transmembrane region" description="Helical" evidence="1">
    <location>
        <begin position="76"/>
        <end position="96"/>
    </location>
</feature>
<feature type="transmembrane region" description="Helical" evidence="1">
    <location>
        <begin position="114"/>
        <end position="134"/>
    </location>
</feature>
<feature type="transmembrane region" description="Helical" evidence="1">
    <location>
        <begin position="166"/>
        <end position="186"/>
    </location>
</feature>
<feature type="transmembrane region" description="Helical" evidence="1">
    <location>
        <begin position="193"/>
        <end position="213"/>
    </location>
</feature>
<accession>Q5XCY5</accession>
<proteinExistence type="inferred from homology"/>
<reference key="1">
    <citation type="journal article" date="2004" name="J. Infect. Dis.">
        <title>Progress toward characterization of the group A Streptococcus metagenome: complete genome sequence of a macrolide-resistant serotype M6 strain.</title>
        <authorList>
            <person name="Banks D.J."/>
            <person name="Porcella S.F."/>
            <person name="Barbian K.D."/>
            <person name="Beres S.B."/>
            <person name="Philips L.E."/>
            <person name="Voyich J.M."/>
            <person name="DeLeo F.R."/>
            <person name="Martin J.M."/>
            <person name="Somerville G.A."/>
            <person name="Musser J.M."/>
        </authorList>
    </citation>
    <scope>NUCLEOTIDE SEQUENCE [LARGE SCALE GENOMIC DNA]</scope>
    <source>
        <strain>ATCC BAA-946 / MGAS10394</strain>
    </source>
</reference>
<protein>
    <recommendedName>
        <fullName evidence="1">ATP synthase subunit a</fullName>
    </recommendedName>
    <alternativeName>
        <fullName evidence="1">ATP synthase F0 sector subunit a</fullName>
    </alternativeName>
    <alternativeName>
        <fullName evidence="1">F-ATPase subunit 6</fullName>
    </alternativeName>
</protein>
<sequence length="238" mass="26924">MEEAKIPMLKLGPITFNLTLLAVCIVTIAVIFAFVFWASRQMKLKPEGKQTALEYLISFVDGIGEEHLDHNLQKSYSLLLFTIFLFVAVANNLGLFTKLETVNGYNLWTSPTANLAFDLALSLFITLMVHIEGVRRRGLVAHLKRLATPWPMTPMNLLEEFTNFLSLAIRLFGNIFAGEVVTGLIVQLANYRVYWWPIAFLVNMAWTAFSVFISCIQAFVFTKLTATYLGKKVNESEE</sequence>
<organism>
    <name type="scientific">Streptococcus pyogenes serotype M6 (strain ATCC BAA-946 / MGAS10394)</name>
    <dbReference type="NCBI Taxonomy" id="286636"/>
    <lineage>
        <taxon>Bacteria</taxon>
        <taxon>Bacillati</taxon>
        <taxon>Bacillota</taxon>
        <taxon>Bacilli</taxon>
        <taxon>Lactobacillales</taxon>
        <taxon>Streptococcaceae</taxon>
        <taxon>Streptococcus</taxon>
    </lineage>
</organism>